<sequence length="182" mass="20225">MDERRLIRVSKYLSKHLRHQPERLGLTLEPGGWVGVEQLLAACAANNVAISLAELHEVVEQNNKQRFGFDPTGQKIRAHQGHSVTVDLGLVAQQPPIILYHGTAKHNLAIILRDGLRPMQRQHVHLSRDRATALQVGARHGQAVILIVQADELFQAGQAFFCSDNGVWLTTAIDPAYLALER</sequence>
<keyword id="KW-0520">NAD</keyword>
<keyword id="KW-0808">Transferase</keyword>
<proteinExistence type="inferred from homology"/>
<evidence type="ECO:0000255" key="1">
    <source>
        <dbReference type="HAMAP-Rule" id="MF_00299"/>
    </source>
</evidence>
<name>KPTA_HERA2</name>
<organism>
    <name type="scientific">Herpetosiphon aurantiacus (strain ATCC 23779 / DSM 785 / 114-95)</name>
    <dbReference type="NCBI Taxonomy" id="316274"/>
    <lineage>
        <taxon>Bacteria</taxon>
        <taxon>Bacillati</taxon>
        <taxon>Chloroflexota</taxon>
        <taxon>Chloroflexia</taxon>
        <taxon>Herpetosiphonales</taxon>
        <taxon>Herpetosiphonaceae</taxon>
        <taxon>Herpetosiphon</taxon>
    </lineage>
</organism>
<reference key="1">
    <citation type="journal article" date="2011" name="Stand. Genomic Sci.">
        <title>Complete genome sequence of the filamentous gliding predatory bacterium Herpetosiphon aurantiacus type strain (114-95(T)).</title>
        <authorList>
            <person name="Kiss H."/>
            <person name="Nett M."/>
            <person name="Domin N."/>
            <person name="Martin K."/>
            <person name="Maresca J.A."/>
            <person name="Copeland A."/>
            <person name="Lapidus A."/>
            <person name="Lucas S."/>
            <person name="Berry K.W."/>
            <person name="Glavina Del Rio T."/>
            <person name="Dalin E."/>
            <person name="Tice H."/>
            <person name="Pitluck S."/>
            <person name="Richardson P."/>
            <person name="Bruce D."/>
            <person name="Goodwin L."/>
            <person name="Han C."/>
            <person name="Detter J.C."/>
            <person name="Schmutz J."/>
            <person name="Brettin T."/>
            <person name="Land M."/>
            <person name="Hauser L."/>
            <person name="Kyrpides N.C."/>
            <person name="Ivanova N."/>
            <person name="Goeker M."/>
            <person name="Woyke T."/>
            <person name="Klenk H.P."/>
            <person name="Bryant D.A."/>
        </authorList>
    </citation>
    <scope>NUCLEOTIDE SEQUENCE [LARGE SCALE GENOMIC DNA]</scope>
    <source>
        <strain>ATCC 23779 / DSM 785 / 114-95</strain>
    </source>
</reference>
<protein>
    <recommendedName>
        <fullName evidence="1">Probable RNA 2'-phosphotransferase</fullName>
        <ecNumber evidence="1">2.7.1.-</ecNumber>
    </recommendedName>
</protein>
<gene>
    <name evidence="1" type="primary">kptA</name>
    <name type="ordered locus">Haur_4889</name>
</gene>
<dbReference type="EC" id="2.7.1.-" evidence="1"/>
<dbReference type="EMBL" id="CP000875">
    <property type="protein sequence ID" value="ABX07519.1"/>
    <property type="molecule type" value="Genomic_DNA"/>
</dbReference>
<dbReference type="SMR" id="A9B356"/>
<dbReference type="STRING" id="316274.Haur_4889"/>
<dbReference type="KEGG" id="hau:Haur_4889"/>
<dbReference type="eggNOG" id="COG1859">
    <property type="taxonomic scope" value="Bacteria"/>
</dbReference>
<dbReference type="HOGENOM" id="CLU_052998_4_0_0"/>
<dbReference type="InParanoid" id="A9B356"/>
<dbReference type="BRENDA" id="2.7.1.160">
    <property type="organism ID" value="2656"/>
</dbReference>
<dbReference type="Proteomes" id="UP000000787">
    <property type="component" value="Chromosome"/>
</dbReference>
<dbReference type="GO" id="GO:0003950">
    <property type="term" value="F:NAD+ poly-ADP-ribosyltransferase activity"/>
    <property type="evidence" value="ECO:0007669"/>
    <property type="project" value="InterPro"/>
</dbReference>
<dbReference type="GO" id="GO:0000215">
    <property type="term" value="F:tRNA 2'-phosphotransferase activity"/>
    <property type="evidence" value="ECO:0007669"/>
    <property type="project" value="TreeGrafter"/>
</dbReference>
<dbReference type="GO" id="GO:0006388">
    <property type="term" value="P:tRNA splicing, via endonucleolytic cleavage and ligation"/>
    <property type="evidence" value="ECO:0007669"/>
    <property type="project" value="UniProtKB-UniRule"/>
</dbReference>
<dbReference type="Gene3D" id="3.20.170.30">
    <property type="match status" value="1"/>
</dbReference>
<dbReference type="Gene3D" id="1.10.10.970">
    <property type="entry name" value="RNA 2'-phosphotransferase, Tpt1/KptA family, N-terminal domain"/>
    <property type="match status" value="1"/>
</dbReference>
<dbReference type="HAMAP" id="MF_00299">
    <property type="entry name" value="KptA"/>
    <property type="match status" value="1"/>
</dbReference>
<dbReference type="InterPro" id="IPR002745">
    <property type="entry name" value="Ptrans_KptA/Tpt1"/>
</dbReference>
<dbReference type="InterPro" id="IPR042081">
    <property type="entry name" value="RNA_2'-PTrans_C"/>
</dbReference>
<dbReference type="InterPro" id="IPR022928">
    <property type="entry name" value="RNA_2'-PTrans_KptA"/>
</dbReference>
<dbReference type="InterPro" id="IPR042080">
    <property type="entry name" value="RNA_2'-PTrans_N"/>
</dbReference>
<dbReference type="NCBIfam" id="NF002014">
    <property type="entry name" value="PRK00819.1-4"/>
    <property type="match status" value="1"/>
</dbReference>
<dbReference type="PANTHER" id="PTHR12684">
    <property type="entry name" value="PUTATIVE PHOSPHOTRANSFERASE"/>
    <property type="match status" value="1"/>
</dbReference>
<dbReference type="PANTHER" id="PTHR12684:SF2">
    <property type="entry name" value="TRNA 2'-PHOSPHOTRANSFERASE 1"/>
    <property type="match status" value="1"/>
</dbReference>
<dbReference type="Pfam" id="PF01885">
    <property type="entry name" value="PTS_2-RNA"/>
    <property type="match status" value="1"/>
</dbReference>
<dbReference type="SUPFAM" id="SSF56399">
    <property type="entry name" value="ADP-ribosylation"/>
    <property type="match status" value="1"/>
</dbReference>
<comment type="function">
    <text evidence="1">Removes the 2'-phosphate from RNA via an intermediate in which the phosphate is ADP-ribosylated by NAD followed by a presumed transesterification to release the RNA and generate ADP-ribose 1''-2''-cyclic phosphate (APPR&gt;P). May function as an ADP-ribosylase.</text>
</comment>
<comment type="similarity">
    <text evidence="1">Belongs to the KptA/TPT1 family.</text>
</comment>
<feature type="chain" id="PRO_1000115312" description="Probable RNA 2'-phosphotransferase">
    <location>
        <begin position="1"/>
        <end position="182"/>
    </location>
</feature>
<accession>A9B356</accession>